<feature type="chain" id="PRO_0000073817" description="Calsenilin">
    <location>
        <begin position="1"/>
        <end position="256"/>
    </location>
</feature>
<feature type="domain" description="EF-hand 1; degenerate" evidence="11">
    <location>
        <begin position="67"/>
        <end position="123"/>
    </location>
</feature>
<feature type="domain" description="EF-hand 2" evidence="4">
    <location>
        <begin position="126"/>
        <end position="161"/>
    </location>
</feature>
<feature type="domain" description="EF-hand 3" evidence="4">
    <location>
        <begin position="162"/>
        <end position="197"/>
    </location>
</feature>
<feature type="domain" description="EF-hand 4" evidence="4">
    <location>
        <begin position="210"/>
        <end position="245"/>
    </location>
</feature>
<feature type="region of interest" description="Disordered" evidence="5">
    <location>
        <begin position="1"/>
        <end position="22"/>
    </location>
</feature>
<feature type="region of interest" description="Interaction with KCND2" evidence="1">
    <location>
        <begin position="243"/>
        <end position="256"/>
    </location>
</feature>
<feature type="binding site" evidence="4">
    <location>
        <position position="175"/>
    </location>
    <ligand>
        <name>Ca(2+)</name>
        <dbReference type="ChEBI" id="CHEBI:29108"/>
        <label>1</label>
    </ligand>
</feature>
<feature type="binding site" evidence="4">
    <location>
        <position position="177"/>
    </location>
    <ligand>
        <name>Ca(2+)</name>
        <dbReference type="ChEBI" id="CHEBI:29108"/>
        <label>1</label>
    </ligand>
</feature>
<feature type="binding site" evidence="4">
    <location>
        <position position="179"/>
    </location>
    <ligand>
        <name>Ca(2+)</name>
        <dbReference type="ChEBI" id="CHEBI:29108"/>
        <label>1</label>
    </ligand>
</feature>
<feature type="binding site" evidence="4">
    <location>
        <position position="181"/>
    </location>
    <ligand>
        <name>Ca(2+)</name>
        <dbReference type="ChEBI" id="CHEBI:29108"/>
        <label>1</label>
    </ligand>
</feature>
<feature type="binding site" evidence="4">
    <location>
        <position position="186"/>
    </location>
    <ligand>
        <name>Ca(2+)</name>
        <dbReference type="ChEBI" id="CHEBI:29108"/>
        <label>1</label>
    </ligand>
</feature>
<feature type="binding site" evidence="4">
    <location>
        <position position="223"/>
    </location>
    <ligand>
        <name>Ca(2+)</name>
        <dbReference type="ChEBI" id="CHEBI:29108"/>
        <label>2</label>
    </ligand>
</feature>
<feature type="binding site" evidence="4">
    <location>
        <position position="225"/>
    </location>
    <ligand>
        <name>Ca(2+)</name>
        <dbReference type="ChEBI" id="CHEBI:29108"/>
        <label>2</label>
    </ligand>
</feature>
<feature type="binding site" evidence="4">
    <location>
        <position position="227"/>
    </location>
    <ligand>
        <name>Ca(2+)</name>
        <dbReference type="ChEBI" id="CHEBI:29108"/>
        <label>2</label>
    </ligand>
</feature>
<feature type="binding site" evidence="4">
    <location>
        <position position="234"/>
    </location>
    <ligand>
        <name>Ca(2+)</name>
        <dbReference type="ChEBI" id="CHEBI:29108"/>
        <label>2</label>
    </ligand>
</feature>
<feature type="modified residue" description="Phosphoserine" evidence="12">
    <location>
        <position position="14"/>
    </location>
</feature>
<feature type="modified residue" description="Phosphoserine" evidence="2">
    <location>
        <position position="60"/>
    </location>
</feature>
<feature type="modified residue" description="Phosphoserine" evidence="3">
    <location>
        <position position="63"/>
    </location>
</feature>
<feature type="lipid moiety-binding region" description="S-palmitoyl cysteine" evidence="7">
    <location>
        <position position="45"/>
    </location>
</feature>
<feature type="lipid moiety-binding region" description="S-palmitoyl cysteine" evidence="7">
    <location>
        <position position="46"/>
    </location>
</feature>
<feature type="cross-link" description="Glycyl lysine isopeptide (Lys-Gly) (interchain with G-Cter in SUMO1)" evidence="3">
    <location>
        <position position="26"/>
    </location>
</feature>
<feature type="cross-link" description="Glycyl lysine isopeptide (Lys-Gly) (interchain with G-Cter in SUMO1)" evidence="3">
    <location>
        <position position="90"/>
    </location>
</feature>
<feature type="mutagenesis site" description="Greatly reduces plasma membrane localization." evidence="7">
    <original>CC</original>
    <variation>AA</variation>
    <variation>SS</variation>
    <location>
        <begin position="45"/>
        <end position="46"/>
    </location>
</feature>
<feature type="sequence conflict" description="In Ref. 2; AAG15382." evidence="11" ref="2">
    <original>E</original>
    <variation>K</variation>
    <location>
        <position position="208"/>
    </location>
</feature>
<sequence length="256" mass="29471">MQRTKEAMKASDGSLLGDPGRIPLSKREGIKWQRPRFTRQALMRCCLIKWILSSAAPQGSDSSDSELELSTVRHQPEGLDQLQAQTKFTKKELQSLYRGFKNECPTGLVDEDTFKLIYSQFFPQGDATTYAHFLFNAFDADGNGAIHFEDFVVGLSILLRGTVHEKLKWAFNLYDINKDGYITKEEMLAIMKSIYDMMGRHTYPILREDAPLEHVERFFQKMDRNQDGVVTIDEFLETCQKDENIMSSMQLFENVI</sequence>
<reference key="1">
    <citation type="submission" date="2000-05" db="EMBL/GenBank/DDBJ databases">
        <title>A-type potassium channel modulating protein 3.</title>
        <authorList>
            <person name="Ohya S."/>
            <person name="Imaizumi Y."/>
        </authorList>
    </citation>
    <scope>NUCLEOTIDE SEQUENCE [MRNA]</scope>
    <source>
        <tissue>Brain</tissue>
    </source>
</reference>
<reference key="2">
    <citation type="submission" date="2000-08" db="EMBL/GenBank/DDBJ databases">
        <title>Molecular cloning of the rat DREAM gene.</title>
        <authorList>
            <person name="Leclerc G.M."/>
            <person name="Shorte S.L."/>
            <person name="Leclerc G.J."/>
            <person name="Frawley L.S."/>
        </authorList>
    </citation>
    <scope>NUCLEOTIDE SEQUENCE [MRNA]</scope>
    <source>
        <strain>Sprague-Dawley</strain>
        <tissue>Pituitary</tissue>
    </source>
</reference>
<reference key="3">
    <citation type="journal article" date="2000" name="Nature">
        <title>Modulation of A-type potassium channels by a family of calcium sensors.</title>
        <authorList>
            <person name="An W.F."/>
            <person name="Bowlby M.R."/>
            <person name="Betty M."/>
            <person name="Cao J."/>
            <person name="Ling H.-P."/>
            <person name="Mendoza G."/>
            <person name="Hinson J.W."/>
            <person name="Mattsson K.I."/>
            <person name="Strassle B.W."/>
            <person name="Trimmer J.S."/>
            <person name="Rhodes K.J."/>
        </authorList>
    </citation>
    <scope>INTERACTION WITH KCND2 AND KCND3</scope>
</reference>
<reference key="4">
    <citation type="journal article" date="2002" name="J. Biol. Chem.">
        <title>Palmitoylation of KChIP splicing variants is required for efficient cell surface expression of Kv4.3 channels.</title>
        <authorList>
            <person name="Takimoto K."/>
            <person name="Yang E.-K."/>
            <person name="Conforti L."/>
        </authorList>
    </citation>
    <scope>SUBCELLULAR LOCATION</scope>
    <scope>PALMITOYLATION AT CYS-45 AND CYS-46</scope>
    <scope>MUTAGENESIS OF 45-CYS-CYS-46</scope>
</reference>
<reference key="5">
    <citation type="journal article" date="2004" name="J. Biol. Chem.">
        <title>KChIP3 rescues the functional expression of Shal channel tetramerization mutants.</title>
        <authorList>
            <person name="Kunjilwar K."/>
            <person name="Strang C."/>
            <person name="DeRubeis D."/>
            <person name="Pfaffinger P.J."/>
        </authorList>
    </citation>
    <scope>INTERACTION WITH KCND2</scope>
</reference>
<reference key="6">
    <citation type="journal article" date="2004" name="J. Neurosci.">
        <title>KChIPs and Kv4 alpha subunits as integral components of A-type potassium channels in mammalian brain.</title>
        <authorList>
            <person name="Rhodes K.J."/>
            <person name="Carroll K.I."/>
            <person name="Sung M.A."/>
            <person name="Doliveira L.C."/>
            <person name="Monaghan M.M."/>
            <person name="Burke S.L."/>
            <person name="Strassle B.W."/>
            <person name="Buchwalder L."/>
            <person name="Menegola M."/>
            <person name="Cao J."/>
            <person name="An W.F."/>
            <person name="Trimmer J.S."/>
        </authorList>
    </citation>
    <scope>TISSUE SPECIFICITY</scope>
    <scope>INTERACTION WITH KCND2</scope>
</reference>
<reference key="7">
    <citation type="journal article" date="2005" name="J. Physiol. (Lond.)">
        <title>Multiprotein assembly of Kv4.2, KChIP3 and DPP10 produces ternary channel complexes with ISA-like properties.</title>
        <authorList>
            <person name="Jerng H.H."/>
            <person name="Kunjilwar K."/>
            <person name="Pfaffinger P.J."/>
        </authorList>
    </citation>
    <scope>INTERACTION WITH KCND2 AND DPP10</scope>
    <scope>SUBCELLULAR LOCATION</scope>
    <scope>TISSUE SPECIFICITY</scope>
</reference>
<reference key="8">
    <citation type="journal article" date="2012" name="Nat. Commun.">
        <title>Quantitative maps of protein phosphorylation sites across 14 different rat organs and tissues.</title>
        <authorList>
            <person name="Lundby A."/>
            <person name="Secher A."/>
            <person name="Lage K."/>
            <person name="Nordsborg N.B."/>
            <person name="Dmytriyev A."/>
            <person name="Lundby C."/>
            <person name="Olsen J.V."/>
        </authorList>
    </citation>
    <scope>PHOSPHORYLATION [LARGE SCALE ANALYSIS] AT SER-14</scope>
    <scope>IDENTIFICATION BY MASS SPECTROMETRY [LARGE SCALE ANALYSIS]</scope>
</reference>
<protein>
    <recommendedName>
        <fullName>Calsenilin</fullName>
    </recommendedName>
    <alternativeName>
        <fullName>A-type potassium channel modulatory protein 3</fullName>
    </alternativeName>
    <alternativeName>
        <fullName>DRE-antagonist modulator</fullName>
        <shortName>DREAM</shortName>
    </alternativeName>
    <alternativeName>
        <fullName>Kv channel-interacting protein 3</fullName>
        <shortName>KChIP3</shortName>
    </alternativeName>
</protein>
<comment type="function">
    <text evidence="2">Calcium-dependent transcriptional repressor that binds to the DRE element of genes including PDYN and FOS. Affinity for DNA is reduced upon binding to calcium and enhanced by binding to magnesium. Seems to be involved in nociception (By similarity).</text>
</comment>
<comment type="function">
    <text evidence="3">Regulatory subunit of Kv4/D (Shal)-type voltage-gated rapidly inactivating A-type potassium channels, such as KCND2/Kv4.2 and KCND3/Kv4.3. Modulates channel expression at the cell membrane, gating characteristics, inactivation kinetics and rate of recovery from inactivation in a calcium-dependent and isoform-specific manner (By similarity).</text>
</comment>
<comment type="function">
    <text evidence="3">May play a role in the regulation of PSEN2 proteolytic processing and apoptosis. Together with PSEN2 involved in modulation of amyloid-beta formation (By similarity).</text>
</comment>
<comment type="subunit">
    <text evidence="2 6 8 9 10">Binds to DNA as a homomultimer. Dimerization is induced by binding to calcium. Interacts with the C-terminus of PSEN1 and PSEN2 and with PSEN2 CTF subunit. Associates with KCN1. Component of heteromultimeric potassium channels (PubMed:16123112). Identified in potassium channel complexes containing KCND1, KCND2, KCND3, KCNIP1, KCNIP2, KCNIP3, KCNIP4, DPP6 and DPP10 (By similarity). Interacts with KCND2 and KCND3 (PubMed:10676964).</text>
</comment>
<comment type="subcellular location">
    <subcellularLocation>
        <location evidence="7">Cytoplasm</location>
    </subcellularLocation>
    <subcellularLocation>
        <location evidence="7 10">Cell membrane</location>
        <topology evidence="7">Lipid-anchor</topology>
    </subcellularLocation>
    <subcellularLocation>
        <location evidence="7">Endoplasmic reticulum</location>
    </subcellularLocation>
    <subcellularLocation>
        <location evidence="7">Golgi apparatus</location>
    </subcellularLocation>
    <subcellularLocation>
        <location evidence="3">Nucleus</location>
    </subcellularLocation>
    <text evidence="3">Also membrane-bound, associated with the plasma membrane. In the presence of PSEN2 associated with the endoplasmic reticulum and Golgi. The sumoylated form is present only in the nucleus.</text>
</comment>
<comment type="tissue specificity">
    <text evidence="8 10">Detected in brain cortex, thalamus, dentate gyrus and cerebellum (at protein level) (PubMed:16123112). Expressed in brain. Colocalizes with KCND2 in excitatory neurons including cortical and hippocampal CA1 pyramidal cells.</text>
</comment>
<comment type="PTM">
    <text evidence="7">Palmitoylated. Palmitoylation enhances association with the plasma membrane.</text>
</comment>
<comment type="PTM">
    <text evidence="1">Proteolytically cleaved by caspase-3.</text>
</comment>
<comment type="similarity">
    <text evidence="11">Belongs to the recoverin family.</text>
</comment>
<organism>
    <name type="scientific">Rattus norvegicus</name>
    <name type="common">Rat</name>
    <dbReference type="NCBI Taxonomy" id="10116"/>
    <lineage>
        <taxon>Eukaryota</taxon>
        <taxon>Metazoa</taxon>
        <taxon>Chordata</taxon>
        <taxon>Craniata</taxon>
        <taxon>Vertebrata</taxon>
        <taxon>Euteleostomi</taxon>
        <taxon>Mammalia</taxon>
        <taxon>Eutheria</taxon>
        <taxon>Euarchontoglires</taxon>
        <taxon>Glires</taxon>
        <taxon>Rodentia</taxon>
        <taxon>Myomorpha</taxon>
        <taxon>Muroidea</taxon>
        <taxon>Muridae</taxon>
        <taxon>Murinae</taxon>
        <taxon>Rattus</taxon>
    </lineage>
</organism>
<name>CSEN_RAT</name>
<proteinExistence type="evidence at protein level"/>
<dbReference type="EMBL" id="AB043892">
    <property type="protein sequence ID" value="BAA96360.1"/>
    <property type="molecule type" value="mRNA"/>
</dbReference>
<dbReference type="EMBL" id="AF297118">
    <property type="protein sequence ID" value="AAG15382.1"/>
    <property type="molecule type" value="mRNA"/>
</dbReference>
<dbReference type="RefSeq" id="NP_115851.1">
    <property type="nucleotide sequence ID" value="NM_032462.2"/>
</dbReference>
<dbReference type="BMRB" id="Q9JM47"/>
<dbReference type="SMR" id="Q9JM47"/>
<dbReference type="BioGRID" id="249311">
    <property type="interactions" value="1"/>
</dbReference>
<dbReference type="CORUM" id="Q9JM47"/>
<dbReference type="FunCoup" id="Q9JM47">
    <property type="interactions" value="469"/>
</dbReference>
<dbReference type="STRING" id="10116.ENSRNOP00000071572"/>
<dbReference type="iPTMnet" id="Q9JM47"/>
<dbReference type="PhosphoSitePlus" id="Q9JM47"/>
<dbReference type="SwissPalm" id="Q9JM47"/>
<dbReference type="PaxDb" id="10116-ENSRNOP00000047927"/>
<dbReference type="ABCD" id="Q9JM47">
    <property type="antibodies" value="2 sequenced antibodies"/>
</dbReference>
<dbReference type="GeneID" id="65199"/>
<dbReference type="KEGG" id="rno:65199"/>
<dbReference type="UCSC" id="RGD:70888">
    <property type="organism name" value="rat"/>
</dbReference>
<dbReference type="AGR" id="RGD:70888"/>
<dbReference type="CTD" id="30818"/>
<dbReference type="RGD" id="70888">
    <property type="gene designation" value="Kcnip3"/>
</dbReference>
<dbReference type="VEuPathDB" id="HostDB:ENSRNOG00000014152"/>
<dbReference type="eggNOG" id="KOG0044">
    <property type="taxonomic scope" value="Eukaryota"/>
</dbReference>
<dbReference type="HOGENOM" id="CLU_072366_2_2_1"/>
<dbReference type="InParanoid" id="Q9JM47"/>
<dbReference type="OrthoDB" id="191686at2759"/>
<dbReference type="PhylomeDB" id="Q9JM47"/>
<dbReference type="Reactome" id="R-RNO-5576894">
    <property type="pathway name" value="Phase 1 - inactivation of fast Na+ channels"/>
</dbReference>
<dbReference type="PRO" id="PR:Q9JM47"/>
<dbReference type="Proteomes" id="UP000002494">
    <property type="component" value="Chromosome 3"/>
</dbReference>
<dbReference type="Bgee" id="ENSRNOG00000014152">
    <property type="expression patterns" value="Expressed in frontal cortex and 17 other cell types or tissues"/>
</dbReference>
<dbReference type="ExpressionAtlas" id="Q9JM47">
    <property type="expression patterns" value="baseline and differential"/>
</dbReference>
<dbReference type="GO" id="GO:0030424">
    <property type="term" value="C:axon"/>
    <property type="evidence" value="ECO:0000314"/>
    <property type="project" value="RGD"/>
</dbReference>
<dbReference type="GO" id="GO:0043679">
    <property type="term" value="C:axon terminus"/>
    <property type="evidence" value="ECO:0000314"/>
    <property type="project" value="RGD"/>
</dbReference>
<dbReference type="GO" id="GO:0005829">
    <property type="term" value="C:cytosol"/>
    <property type="evidence" value="ECO:0000250"/>
    <property type="project" value="UniProtKB"/>
</dbReference>
<dbReference type="GO" id="GO:0030425">
    <property type="term" value="C:dendrite"/>
    <property type="evidence" value="ECO:0000314"/>
    <property type="project" value="RGD"/>
</dbReference>
<dbReference type="GO" id="GO:0005783">
    <property type="term" value="C:endoplasmic reticulum"/>
    <property type="evidence" value="ECO:0007669"/>
    <property type="project" value="UniProtKB-SubCell"/>
</dbReference>
<dbReference type="GO" id="GO:0005794">
    <property type="term" value="C:Golgi apparatus"/>
    <property type="evidence" value="ECO:0007669"/>
    <property type="project" value="UniProtKB-SubCell"/>
</dbReference>
<dbReference type="GO" id="GO:0005634">
    <property type="term" value="C:nucleus"/>
    <property type="evidence" value="ECO:0000266"/>
    <property type="project" value="RGD"/>
</dbReference>
<dbReference type="GO" id="GO:0032993">
    <property type="term" value="C:protein-DNA complex"/>
    <property type="evidence" value="ECO:0000314"/>
    <property type="project" value="RGD"/>
</dbReference>
<dbReference type="GO" id="GO:0008076">
    <property type="term" value="C:voltage-gated potassium channel complex"/>
    <property type="evidence" value="ECO:0000250"/>
    <property type="project" value="UniProtKB"/>
</dbReference>
<dbReference type="GO" id="GO:0005509">
    <property type="term" value="F:calcium ion binding"/>
    <property type="evidence" value="ECO:0000266"/>
    <property type="project" value="RGD"/>
</dbReference>
<dbReference type="GO" id="GO:0048306">
    <property type="term" value="F:calcium-dependent protein binding"/>
    <property type="evidence" value="ECO:0000266"/>
    <property type="project" value="RGD"/>
</dbReference>
<dbReference type="GO" id="GO:0001046">
    <property type="term" value="F:core promoter sequence-specific DNA binding"/>
    <property type="evidence" value="ECO:0000266"/>
    <property type="project" value="RGD"/>
</dbReference>
<dbReference type="GO" id="GO:0003677">
    <property type="term" value="F:DNA binding"/>
    <property type="evidence" value="ECO:0000266"/>
    <property type="project" value="RGD"/>
</dbReference>
<dbReference type="GO" id="GO:0001227">
    <property type="term" value="F:DNA-binding transcription repressor activity, RNA polymerase II-specific"/>
    <property type="evidence" value="ECO:0000266"/>
    <property type="project" value="RGD"/>
</dbReference>
<dbReference type="GO" id="GO:0000287">
    <property type="term" value="F:magnesium ion binding"/>
    <property type="evidence" value="ECO:0000266"/>
    <property type="project" value="RGD"/>
</dbReference>
<dbReference type="GO" id="GO:0005267">
    <property type="term" value="F:potassium channel activity"/>
    <property type="evidence" value="ECO:0007669"/>
    <property type="project" value="UniProtKB-KW"/>
</dbReference>
<dbReference type="GO" id="GO:0015459">
    <property type="term" value="F:potassium channel regulator activity"/>
    <property type="evidence" value="ECO:0000314"/>
    <property type="project" value="RGD"/>
</dbReference>
<dbReference type="GO" id="GO:0042803">
    <property type="term" value="F:protein homodimerization activity"/>
    <property type="evidence" value="ECO:0000266"/>
    <property type="project" value="RGD"/>
</dbReference>
<dbReference type="GO" id="GO:0000978">
    <property type="term" value="F:RNA polymerase II cis-regulatory region sequence-specific DNA binding"/>
    <property type="evidence" value="ECO:0000266"/>
    <property type="project" value="RGD"/>
</dbReference>
<dbReference type="GO" id="GO:0043565">
    <property type="term" value="F:sequence-specific DNA binding"/>
    <property type="evidence" value="ECO:0000314"/>
    <property type="project" value="RGD"/>
</dbReference>
<dbReference type="GO" id="GO:0044325">
    <property type="term" value="F:transmembrane transporter binding"/>
    <property type="evidence" value="ECO:0000353"/>
    <property type="project" value="RGD"/>
</dbReference>
<dbReference type="GO" id="GO:0006915">
    <property type="term" value="P:apoptotic process"/>
    <property type="evidence" value="ECO:0007669"/>
    <property type="project" value="UniProtKB-KW"/>
</dbReference>
<dbReference type="GO" id="GO:0048266">
    <property type="term" value="P:behavioral response to pain"/>
    <property type="evidence" value="ECO:0000266"/>
    <property type="project" value="RGD"/>
</dbReference>
<dbReference type="GO" id="GO:0006886">
    <property type="term" value="P:intracellular protein transport"/>
    <property type="evidence" value="ECO:0000315"/>
    <property type="project" value="RGD"/>
</dbReference>
<dbReference type="GO" id="GO:0000122">
    <property type="term" value="P:negative regulation of transcription by RNA polymerase II"/>
    <property type="evidence" value="ECO:0000266"/>
    <property type="project" value="RGD"/>
</dbReference>
<dbReference type="GO" id="GO:0072659">
    <property type="term" value="P:protein localization to plasma membrane"/>
    <property type="evidence" value="ECO:0000250"/>
    <property type="project" value="UniProtKB"/>
</dbReference>
<dbReference type="GO" id="GO:0043523">
    <property type="term" value="P:regulation of neuron apoptotic process"/>
    <property type="evidence" value="ECO:0000266"/>
    <property type="project" value="RGD"/>
</dbReference>
<dbReference type="GO" id="GO:1901379">
    <property type="term" value="P:regulation of potassium ion transmembrane transport"/>
    <property type="evidence" value="ECO:0000250"/>
    <property type="project" value="UniProtKB"/>
</dbReference>
<dbReference type="GO" id="GO:0009966">
    <property type="term" value="P:regulation of signal transduction"/>
    <property type="evidence" value="ECO:0000318"/>
    <property type="project" value="GO_Central"/>
</dbReference>
<dbReference type="GO" id="GO:0032026">
    <property type="term" value="P:response to magnesium ion"/>
    <property type="evidence" value="ECO:0000266"/>
    <property type="project" value="RGD"/>
</dbReference>
<dbReference type="GO" id="GO:0048265">
    <property type="term" value="P:response to pain"/>
    <property type="evidence" value="ECO:0000266"/>
    <property type="project" value="RGD"/>
</dbReference>
<dbReference type="GO" id="GO:0019233">
    <property type="term" value="P:sensory perception of pain"/>
    <property type="evidence" value="ECO:0000266"/>
    <property type="project" value="RGD"/>
</dbReference>
<dbReference type="CDD" id="cd00051">
    <property type="entry name" value="EFh"/>
    <property type="match status" value="2"/>
</dbReference>
<dbReference type="FunFam" id="1.10.238.10:FF:000043">
    <property type="entry name" value="Kv channel-interacting protein 1 isoform 2"/>
    <property type="match status" value="1"/>
</dbReference>
<dbReference type="Gene3D" id="1.10.238.10">
    <property type="entry name" value="EF-hand"/>
    <property type="match status" value="1"/>
</dbReference>
<dbReference type="InterPro" id="IPR011992">
    <property type="entry name" value="EF-hand-dom_pair"/>
</dbReference>
<dbReference type="InterPro" id="IPR018247">
    <property type="entry name" value="EF_Hand_1_Ca_BS"/>
</dbReference>
<dbReference type="InterPro" id="IPR002048">
    <property type="entry name" value="EF_hand_dom"/>
</dbReference>
<dbReference type="InterPro" id="IPR028846">
    <property type="entry name" value="Recoverin"/>
</dbReference>
<dbReference type="PANTHER" id="PTHR23055">
    <property type="entry name" value="CALCIUM BINDING PROTEINS"/>
    <property type="match status" value="1"/>
</dbReference>
<dbReference type="PANTHER" id="PTHR23055:SF165">
    <property type="entry name" value="CALSENILIN"/>
    <property type="match status" value="1"/>
</dbReference>
<dbReference type="Pfam" id="PF13499">
    <property type="entry name" value="EF-hand_7"/>
    <property type="match status" value="1"/>
</dbReference>
<dbReference type="Pfam" id="PF13833">
    <property type="entry name" value="EF-hand_8"/>
    <property type="match status" value="1"/>
</dbReference>
<dbReference type="PRINTS" id="PR00450">
    <property type="entry name" value="RECOVERIN"/>
</dbReference>
<dbReference type="SMART" id="SM00054">
    <property type="entry name" value="EFh"/>
    <property type="match status" value="3"/>
</dbReference>
<dbReference type="SUPFAM" id="SSF47473">
    <property type="entry name" value="EF-hand"/>
    <property type="match status" value="1"/>
</dbReference>
<dbReference type="PROSITE" id="PS00018">
    <property type="entry name" value="EF_HAND_1"/>
    <property type="match status" value="2"/>
</dbReference>
<dbReference type="PROSITE" id="PS50222">
    <property type="entry name" value="EF_HAND_2"/>
    <property type="match status" value="3"/>
</dbReference>
<accession>Q9JM47</accession>
<gene>
    <name type="primary">Kcnip3</name>
    <name type="synonym">Csen</name>
    <name type="synonym">Dream</name>
    <name type="synonym">Kchip3</name>
</gene>
<evidence type="ECO:0000250" key="1"/>
<evidence type="ECO:0000250" key="2">
    <source>
        <dbReference type="UniProtKB" id="Q9QXT8"/>
    </source>
</evidence>
<evidence type="ECO:0000250" key="3">
    <source>
        <dbReference type="UniProtKB" id="Q9Y2W7"/>
    </source>
</evidence>
<evidence type="ECO:0000255" key="4">
    <source>
        <dbReference type="PROSITE-ProRule" id="PRU00448"/>
    </source>
</evidence>
<evidence type="ECO:0000256" key="5">
    <source>
        <dbReference type="SAM" id="MobiDB-lite"/>
    </source>
</evidence>
<evidence type="ECO:0000269" key="6">
    <source>
    </source>
</evidence>
<evidence type="ECO:0000269" key="7">
    <source>
    </source>
</evidence>
<evidence type="ECO:0000269" key="8">
    <source>
    </source>
</evidence>
<evidence type="ECO:0000269" key="9">
    <source>
    </source>
</evidence>
<evidence type="ECO:0000269" key="10">
    <source>
    </source>
</evidence>
<evidence type="ECO:0000305" key="11"/>
<evidence type="ECO:0007744" key="12">
    <source>
    </source>
</evidence>
<keyword id="KW-0053">Apoptosis</keyword>
<keyword id="KW-0106">Calcium</keyword>
<keyword id="KW-1003">Cell membrane</keyword>
<keyword id="KW-0963">Cytoplasm</keyword>
<keyword id="KW-0256">Endoplasmic reticulum</keyword>
<keyword id="KW-0333">Golgi apparatus</keyword>
<keyword id="KW-0407">Ion channel</keyword>
<keyword id="KW-0406">Ion transport</keyword>
<keyword id="KW-1017">Isopeptide bond</keyword>
<keyword id="KW-0449">Lipoprotein</keyword>
<keyword id="KW-0472">Membrane</keyword>
<keyword id="KW-0479">Metal-binding</keyword>
<keyword id="KW-0539">Nucleus</keyword>
<keyword id="KW-0564">Palmitate</keyword>
<keyword id="KW-0597">Phosphoprotein</keyword>
<keyword id="KW-0630">Potassium</keyword>
<keyword id="KW-0631">Potassium channel</keyword>
<keyword id="KW-0633">Potassium transport</keyword>
<keyword id="KW-1185">Reference proteome</keyword>
<keyword id="KW-0677">Repeat</keyword>
<keyword id="KW-0678">Repressor</keyword>
<keyword id="KW-0804">Transcription</keyword>
<keyword id="KW-0805">Transcription regulation</keyword>
<keyword id="KW-0813">Transport</keyword>
<keyword id="KW-0832">Ubl conjugation</keyword>
<keyword id="KW-0851">Voltage-gated channel</keyword>